<organism>
    <name type="scientific">Arabidopsis thaliana</name>
    <name type="common">Mouse-ear cress</name>
    <dbReference type="NCBI Taxonomy" id="3702"/>
    <lineage>
        <taxon>Eukaryota</taxon>
        <taxon>Viridiplantae</taxon>
        <taxon>Streptophyta</taxon>
        <taxon>Embryophyta</taxon>
        <taxon>Tracheophyta</taxon>
        <taxon>Spermatophyta</taxon>
        <taxon>Magnoliopsida</taxon>
        <taxon>eudicotyledons</taxon>
        <taxon>Gunneridae</taxon>
        <taxon>Pentapetalae</taxon>
        <taxon>rosids</taxon>
        <taxon>malvids</taxon>
        <taxon>Brassicales</taxon>
        <taxon>Brassicaceae</taxon>
        <taxon>Camelineae</taxon>
        <taxon>Arabidopsis</taxon>
    </lineage>
</organism>
<protein>
    <recommendedName>
        <fullName evidence="5">Protein SAR DEFICIENT 4</fullName>
    </recommendedName>
    <alternativeName>
        <fullName evidence="6">Ornithine cyclodeaminase-like protein</fullName>
        <shortName evidence="4">AtOCD</shortName>
    </alternativeName>
</protein>
<comment type="function">
    <text evidence="2 3">Involved in the biosynthesis of pipecolate (Pip), a metabolite that orchestrates defense amplification, positive regulation of salicylic acid (SA) biosynthesis, and priming to guarantee effective local resistance induction and the establishment of systemic acquired resistance (SAR). Converts delta-(1)-piperideine-2-carboxylate (P2C) to Pip. Mediates reduction of P2C and biosynthesis of Pip in systemic tissue and contributes to SAR establishment (PubMed:27758894). Does not possess ornithine cyclodeaminase activity in vitro (PubMed:24237637).</text>
</comment>
<comment type="subcellular location">
    <subcellularLocation>
        <location evidence="2">Plastid</location>
        <location evidence="2">Chloroplast</location>
    </subcellularLocation>
</comment>
<comment type="induction">
    <text evidence="2 3">Induced by Pseudomonas syringae pv. maculicola (PubMed:27758894). Induced by low water potential stress and treatment with exogenous proline (PubMed:24237637).</text>
</comment>
<comment type="disruption phenotype">
    <text evidence="2 3">No visible phenotype under normal growth conditions (PubMed:24237637, PubMed:27758894). Mutant plants have compromised systemic acquired resistance (SAR) (PubMed:27758894). Mutant seedlings accumulate increased levels of proline (PubMed:24237637).</text>
</comment>
<comment type="similarity">
    <text evidence="6">Belongs to the ornithine cyclodeaminase/mu-crystallin family.</text>
</comment>
<feature type="transit peptide" description="Chloroplast" evidence="1">
    <location>
        <begin position="1"/>
        <end position="42"/>
    </location>
</feature>
<feature type="chain" id="PRO_0000441128" description="Protein SAR DEFICIENT 4" evidence="1">
    <location>
        <begin position="43"/>
        <end position="325"/>
    </location>
</feature>
<feature type="mutagenesis site" description="In sard4-3; compromises systemic acquired resistance (SAR)." evidence="3">
    <original>G</original>
    <variation>E</variation>
    <location>
        <position position="89"/>
    </location>
</feature>
<feature type="mutagenesis site" description="In sard4-4; compromises systemic acquired resistance (SAR)." evidence="3">
    <original>G</original>
    <variation>D</variation>
    <location>
        <position position="138"/>
    </location>
</feature>
<feature type="mutagenesis site" description="In sard4-1; compromises systemic acquired resistance (SAR)." evidence="3">
    <original>S</original>
    <variation>N</variation>
    <location>
        <position position="205"/>
    </location>
</feature>
<feature type="sequence conflict" description="In Ref. 5; AAM61233." evidence="6" ref="5">
    <original>A</original>
    <variation>V</variation>
    <location>
        <position position="264"/>
    </location>
</feature>
<feature type="sequence conflict" description="In Ref. 3; AAO42217." evidence="6" ref="3">
    <original>D</original>
    <variation>G</variation>
    <location>
        <position position="276"/>
    </location>
</feature>
<reference key="1">
    <citation type="journal article" date="1998" name="DNA Res.">
        <title>Structural analysis of Arabidopsis thaliana chromosome 5. IV. Sequence features of the regions of 1,456,315 bp covered by nineteen physically assigned P1 and TAC clones.</title>
        <authorList>
            <person name="Sato S."/>
            <person name="Kaneko T."/>
            <person name="Kotani H."/>
            <person name="Nakamura Y."/>
            <person name="Asamizu E."/>
            <person name="Miyajima N."/>
            <person name="Tabata S."/>
        </authorList>
    </citation>
    <scope>NUCLEOTIDE SEQUENCE [LARGE SCALE GENOMIC DNA]</scope>
    <source>
        <strain>cv. Columbia</strain>
    </source>
</reference>
<reference key="2">
    <citation type="journal article" date="2017" name="Plant J.">
        <title>Araport11: a complete reannotation of the Arabidopsis thaliana reference genome.</title>
        <authorList>
            <person name="Cheng C.Y."/>
            <person name="Krishnakumar V."/>
            <person name="Chan A.P."/>
            <person name="Thibaud-Nissen F."/>
            <person name="Schobel S."/>
            <person name="Town C.D."/>
        </authorList>
    </citation>
    <scope>GENOME REANNOTATION</scope>
    <source>
        <strain>cv. Columbia</strain>
    </source>
</reference>
<reference key="3">
    <citation type="journal article" date="2003" name="Science">
        <title>Empirical analysis of transcriptional activity in the Arabidopsis genome.</title>
        <authorList>
            <person name="Yamada K."/>
            <person name="Lim J."/>
            <person name="Dale J.M."/>
            <person name="Chen H."/>
            <person name="Shinn P."/>
            <person name="Palm C.J."/>
            <person name="Southwick A.M."/>
            <person name="Wu H.C."/>
            <person name="Kim C.J."/>
            <person name="Nguyen M."/>
            <person name="Pham P.K."/>
            <person name="Cheuk R.F."/>
            <person name="Karlin-Newmann G."/>
            <person name="Liu S.X."/>
            <person name="Lam B."/>
            <person name="Sakano H."/>
            <person name="Wu T."/>
            <person name="Yu G."/>
            <person name="Miranda M."/>
            <person name="Quach H.L."/>
            <person name="Tripp M."/>
            <person name="Chang C.H."/>
            <person name="Lee J.M."/>
            <person name="Toriumi M.J."/>
            <person name="Chan M.M."/>
            <person name="Tang C.C."/>
            <person name="Onodera C.S."/>
            <person name="Deng J.M."/>
            <person name="Akiyama K."/>
            <person name="Ansari Y."/>
            <person name="Arakawa T."/>
            <person name="Banh J."/>
            <person name="Banno F."/>
            <person name="Bowser L."/>
            <person name="Brooks S.Y."/>
            <person name="Carninci P."/>
            <person name="Chao Q."/>
            <person name="Choy N."/>
            <person name="Enju A."/>
            <person name="Goldsmith A.D."/>
            <person name="Gurjal M."/>
            <person name="Hansen N.F."/>
            <person name="Hayashizaki Y."/>
            <person name="Johnson-Hopson C."/>
            <person name="Hsuan V.W."/>
            <person name="Iida K."/>
            <person name="Karnes M."/>
            <person name="Khan S."/>
            <person name="Koesema E."/>
            <person name="Ishida J."/>
            <person name="Jiang P.X."/>
            <person name="Jones T."/>
            <person name="Kawai J."/>
            <person name="Kamiya A."/>
            <person name="Meyers C."/>
            <person name="Nakajima M."/>
            <person name="Narusaka M."/>
            <person name="Seki M."/>
            <person name="Sakurai T."/>
            <person name="Satou M."/>
            <person name="Tamse R."/>
            <person name="Vaysberg M."/>
            <person name="Wallender E.K."/>
            <person name="Wong C."/>
            <person name="Yamamura Y."/>
            <person name="Yuan S."/>
            <person name="Shinozaki K."/>
            <person name="Davis R.W."/>
            <person name="Theologis A."/>
            <person name="Ecker J.R."/>
        </authorList>
    </citation>
    <scope>NUCLEOTIDE SEQUENCE [LARGE SCALE MRNA]</scope>
    <source>
        <strain>cv. Columbia</strain>
    </source>
</reference>
<reference key="4">
    <citation type="submission" date="2005-05" db="EMBL/GenBank/DDBJ databases">
        <title>Arabidopsis ORF clones.</title>
        <authorList>
            <person name="Kim C.J."/>
            <person name="Chen H."/>
            <person name="Cheuk R.F."/>
            <person name="Shinn P."/>
            <person name="Ecker J.R."/>
        </authorList>
    </citation>
    <scope>NUCLEOTIDE SEQUENCE [LARGE SCALE MRNA]</scope>
    <source>
        <strain>cv. Columbia</strain>
    </source>
</reference>
<reference key="5">
    <citation type="submission" date="2002-03" db="EMBL/GenBank/DDBJ databases">
        <title>Full-length cDNA from Arabidopsis thaliana.</title>
        <authorList>
            <person name="Brover V.V."/>
            <person name="Troukhan M.E."/>
            <person name="Alexandrov N.A."/>
            <person name="Lu Y.-P."/>
            <person name="Flavell R.B."/>
            <person name="Feldmann K.A."/>
        </authorList>
    </citation>
    <scope>NUCLEOTIDE SEQUENCE [LARGE SCALE MRNA]</scope>
</reference>
<reference key="6">
    <citation type="journal article" date="2013" name="BMC Plant Biol.">
        <title>Functional characterization of an ornithine cyclodeaminase-like protein of Arabidopsis thaliana.</title>
        <authorList>
            <person name="Sharma S."/>
            <person name="Shinde S."/>
            <person name="Verslues P.E."/>
        </authorList>
    </citation>
    <scope>FUNCTION</scope>
    <scope>SUBCELLULAR LOCATION</scope>
    <scope>INDUCTION</scope>
    <scope>DISRUPTION PHENOTYPE</scope>
</reference>
<reference key="7">
    <citation type="journal article" date="2016" name="Plant Cell">
        <title>Characterization of a pipecolic acid biosynthesis pathway required for systemic acquired resistance.</title>
        <authorList>
            <person name="Ding P."/>
            <person name="Rekhter D."/>
            <person name="Ding Y."/>
            <person name="Feussner K."/>
            <person name="Busta L."/>
            <person name="Haroth S."/>
            <person name="Xu S."/>
            <person name="Li X."/>
            <person name="Jetter R."/>
            <person name="Feussner I."/>
            <person name="Zhang Y."/>
        </authorList>
    </citation>
    <scope>FUNCTION</scope>
    <scope>INDUCTION BY PSEUDOMONAS SYRINGAE PV MACULICOLA</scope>
    <scope>DISRUPTION PHENOTYPE</scope>
    <scope>MUTAGENESIS OF GLY-89; GLY-138 AND SER-205</scope>
</reference>
<name>SARD4_ARATH</name>
<keyword id="KW-0150">Chloroplast</keyword>
<keyword id="KW-0611">Plant defense</keyword>
<keyword id="KW-0934">Plastid</keyword>
<keyword id="KW-1185">Reference proteome</keyword>
<keyword id="KW-0809">Transit peptide</keyword>
<evidence type="ECO:0000255" key="1"/>
<evidence type="ECO:0000269" key="2">
    <source>
    </source>
</evidence>
<evidence type="ECO:0000269" key="3">
    <source>
    </source>
</evidence>
<evidence type="ECO:0000303" key="4">
    <source>
    </source>
</evidence>
<evidence type="ECO:0000303" key="5">
    <source>
    </source>
</evidence>
<evidence type="ECO:0000305" key="6"/>
<evidence type="ECO:0000312" key="7">
    <source>
        <dbReference type="Araport" id="AT5G52810"/>
    </source>
</evidence>
<evidence type="ECO:0000312" key="8">
    <source>
        <dbReference type="EMBL" id="AED96264.1"/>
    </source>
</evidence>
<proteinExistence type="evidence at protein level"/>
<gene>
    <name evidence="5" type="primary">SARD4</name>
    <name evidence="4" type="synonym">OCD</name>
    <name evidence="7" type="ordered locus">At5g52810</name>
    <name evidence="8" type="ORF">MXC20.2</name>
</gene>
<dbReference type="EMBL" id="AB009055">
    <property type="protein sequence ID" value="BAB10429.1"/>
    <property type="molecule type" value="Genomic_DNA"/>
</dbReference>
<dbReference type="EMBL" id="CP002688">
    <property type="protein sequence ID" value="AED96264.1"/>
    <property type="molecule type" value="Genomic_DNA"/>
</dbReference>
<dbReference type="EMBL" id="BT004199">
    <property type="protein sequence ID" value="AAO42217.1"/>
    <property type="molecule type" value="mRNA"/>
</dbReference>
<dbReference type="EMBL" id="BT020531">
    <property type="protein sequence ID" value="AAW52557.1"/>
    <property type="molecule type" value="mRNA"/>
</dbReference>
<dbReference type="EMBL" id="BT021995">
    <property type="protein sequence ID" value="AAY25407.1"/>
    <property type="molecule type" value="mRNA"/>
</dbReference>
<dbReference type="EMBL" id="AY084671">
    <property type="protein sequence ID" value="AAM61233.1"/>
    <property type="molecule type" value="mRNA"/>
</dbReference>
<dbReference type="RefSeq" id="NP_200093.1">
    <property type="nucleotide sequence ID" value="NM_124659.2"/>
</dbReference>
<dbReference type="SMR" id="Q9FLY0"/>
<dbReference type="FunCoup" id="Q9FLY0">
    <property type="interactions" value="81"/>
</dbReference>
<dbReference type="STRING" id="3702.Q9FLY0"/>
<dbReference type="iPTMnet" id="Q9FLY0"/>
<dbReference type="PaxDb" id="3702-AT5G52810.1"/>
<dbReference type="ProteomicsDB" id="226643"/>
<dbReference type="EnsemblPlants" id="AT5G52810.1">
    <property type="protein sequence ID" value="AT5G52810.1"/>
    <property type="gene ID" value="AT5G52810"/>
</dbReference>
<dbReference type="GeneID" id="835358"/>
<dbReference type="Gramene" id="AT5G52810.1">
    <property type="protein sequence ID" value="AT5G52810.1"/>
    <property type="gene ID" value="AT5G52810"/>
</dbReference>
<dbReference type="KEGG" id="ath:AT5G52810"/>
<dbReference type="Araport" id="AT5G52810"/>
<dbReference type="TAIR" id="AT5G52810">
    <property type="gene designation" value="SARD4"/>
</dbReference>
<dbReference type="eggNOG" id="KOG3007">
    <property type="taxonomic scope" value="Eukaryota"/>
</dbReference>
<dbReference type="HOGENOM" id="CLU_042088_1_2_1"/>
<dbReference type="InParanoid" id="Q9FLY0"/>
<dbReference type="OMA" id="VKIVNVH"/>
<dbReference type="PhylomeDB" id="Q9FLY0"/>
<dbReference type="PRO" id="PR:Q9FLY0"/>
<dbReference type="Proteomes" id="UP000006548">
    <property type="component" value="Chromosome 5"/>
</dbReference>
<dbReference type="ExpressionAtlas" id="Q9FLY0">
    <property type="expression patterns" value="baseline and differential"/>
</dbReference>
<dbReference type="GO" id="GO:0009507">
    <property type="term" value="C:chloroplast"/>
    <property type="evidence" value="ECO:0000314"/>
    <property type="project" value="UniProtKB"/>
</dbReference>
<dbReference type="GO" id="GO:0009536">
    <property type="term" value="C:plastid"/>
    <property type="evidence" value="ECO:0000314"/>
    <property type="project" value="TAIR"/>
</dbReference>
<dbReference type="GO" id="GO:0062046">
    <property type="term" value="F:dehydropipecolic acid reductase"/>
    <property type="evidence" value="ECO:0000315"/>
    <property type="project" value="TAIR"/>
</dbReference>
<dbReference type="GO" id="GO:0062034">
    <property type="term" value="P:L-pipecolic acid biosynthetic process"/>
    <property type="evidence" value="ECO:0000315"/>
    <property type="project" value="TAIR"/>
</dbReference>
<dbReference type="GO" id="GO:1901672">
    <property type="term" value="P:positive regulation of systemic acquired resistance"/>
    <property type="evidence" value="ECO:0000315"/>
    <property type="project" value="UniProtKB"/>
</dbReference>
<dbReference type="GO" id="GO:0009627">
    <property type="term" value="P:systemic acquired resistance"/>
    <property type="evidence" value="ECO:0000314"/>
    <property type="project" value="TAIR"/>
</dbReference>
<dbReference type="FunFam" id="3.40.50.720:FF:000311">
    <property type="entry name" value="Ornithine cyclodeaminase"/>
    <property type="match status" value="1"/>
</dbReference>
<dbReference type="FunFam" id="3.30.1780.10:FF:000003">
    <property type="entry name" value="Protein SAR DEFICIENT 4"/>
    <property type="match status" value="1"/>
</dbReference>
<dbReference type="Gene3D" id="3.40.50.720">
    <property type="entry name" value="NAD(P)-binding Rossmann-like Domain"/>
    <property type="match status" value="1"/>
</dbReference>
<dbReference type="Gene3D" id="3.30.1780.10">
    <property type="entry name" value="ornithine cyclodeaminase, domain 1"/>
    <property type="match status" value="1"/>
</dbReference>
<dbReference type="InterPro" id="IPR036291">
    <property type="entry name" value="NAD(P)-bd_dom_sf"/>
</dbReference>
<dbReference type="InterPro" id="IPR003462">
    <property type="entry name" value="ODC_Mu_crystall"/>
</dbReference>
<dbReference type="InterPro" id="IPR023401">
    <property type="entry name" value="ODC_N"/>
</dbReference>
<dbReference type="NCBIfam" id="NF004793">
    <property type="entry name" value="PRK06141.1"/>
    <property type="match status" value="1"/>
</dbReference>
<dbReference type="PANTHER" id="PTHR13812">
    <property type="entry name" value="KETIMINE REDUCTASE MU-CRYSTALLIN"/>
    <property type="match status" value="1"/>
</dbReference>
<dbReference type="PANTHER" id="PTHR13812:SF19">
    <property type="entry name" value="KETIMINE REDUCTASE MU-CRYSTALLIN"/>
    <property type="match status" value="1"/>
</dbReference>
<dbReference type="Pfam" id="PF02423">
    <property type="entry name" value="OCD_Mu_crystall"/>
    <property type="match status" value="1"/>
</dbReference>
<dbReference type="PIRSF" id="PIRSF001439">
    <property type="entry name" value="CryM"/>
    <property type="match status" value="1"/>
</dbReference>
<dbReference type="SUPFAM" id="SSF51735">
    <property type="entry name" value="NAD(P)-binding Rossmann-fold domains"/>
    <property type="match status" value="1"/>
</dbReference>
<accession>Q9FLY0</accession>
<accession>Q84W61</accession>
<accession>Q8LFS5</accession>
<sequence>MAALPVFIPAESFPSILSHETLINHFRTNLPKHSSTITSPVRQNYTVSSPSSLLLMPSWSSSSSLPYMGVKLVTYFPHNSSQNLPGIHGSYTLFSSTTGQTLATMDGTVLTLYRTSSVSGLGSKILARDDSQVLIMVGSGALAPHLIKSHLAAKPSLRRVIIWNRTPQRAQELAETLSKDPQHKEISFDSHDSLDQIIPLGDIISCATNSTVPLVKGEFLKPGTHLDLVGSFSHEMKECDDNAIQRGSVFVDNDTAMIEAGELAGAFERGVIKREDICGNLVELIKGDKEGRKSSTDITVFKSVGSGTVDLLTAQLVHETYLSRC</sequence>